<evidence type="ECO:0000255" key="1">
    <source>
        <dbReference type="HAMAP-Rule" id="MF_00023"/>
    </source>
</evidence>
<evidence type="ECO:0000256" key="2">
    <source>
        <dbReference type="SAM" id="MobiDB-lite"/>
    </source>
</evidence>
<dbReference type="EMBL" id="CP000110">
    <property type="protein sequence ID" value="ABB33893.1"/>
    <property type="molecule type" value="Genomic_DNA"/>
</dbReference>
<dbReference type="RefSeq" id="WP_011363152.1">
    <property type="nucleotide sequence ID" value="NC_007516.1"/>
</dbReference>
<dbReference type="SMR" id="Q3AND9"/>
<dbReference type="STRING" id="110662.Syncc9605_0117"/>
<dbReference type="KEGG" id="syd:Syncc9605_0117"/>
<dbReference type="eggNOG" id="COG0691">
    <property type="taxonomic scope" value="Bacteria"/>
</dbReference>
<dbReference type="HOGENOM" id="CLU_108953_0_1_3"/>
<dbReference type="OrthoDB" id="9805462at2"/>
<dbReference type="GO" id="GO:0005829">
    <property type="term" value="C:cytosol"/>
    <property type="evidence" value="ECO:0007669"/>
    <property type="project" value="TreeGrafter"/>
</dbReference>
<dbReference type="GO" id="GO:0003723">
    <property type="term" value="F:RNA binding"/>
    <property type="evidence" value="ECO:0007669"/>
    <property type="project" value="UniProtKB-UniRule"/>
</dbReference>
<dbReference type="GO" id="GO:0070929">
    <property type="term" value="P:trans-translation"/>
    <property type="evidence" value="ECO:0007669"/>
    <property type="project" value="UniProtKB-UniRule"/>
</dbReference>
<dbReference type="CDD" id="cd09294">
    <property type="entry name" value="SmpB"/>
    <property type="match status" value="1"/>
</dbReference>
<dbReference type="Gene3D" id="2.40.280.10">
    <property type="match status" value="1"/>
</dbReference>
<dbReference type="HAMAP" id="MF_00023">
    <property type="entry name" value="SmpB"/>
    <property type="match status" value="1"/>
</dbReference>
<dbReference type="InterPro" id="IPR023620">
    <property type="entry name" value="SmpB"/>
</dbReference>
<dbReference type="InterPro" id="IPR000037">
    <property type="entry name" value="SsrA-bd_prot"/>
</dbReference>
<dbReference type="InterPro" id="IPR020081">
    <property type="entry name" value="SsrA-bd_prot_CS"/>
</dbReference>
<dbReference type="NCBIfam" id="NF003843">
    <property type="entry name" value="PRK05422.1"/>
    <property type="match status" value="1"/>
</dbReference>
<dbReference type="NCBIfam" id="TIGR00086">
    <property type="entry name" value="smpB"/>
    <property type="match status" value="1"/>
</dbReference>
<dbReference type="PANTHER" id="PTHR30308:SF2">
    <property type="entry name" value="SSRA-BINDING PROTEIN"/>
    <property type="match status" value="1"/>
</dbReference>
<dbReference type="PANTHER" id="PTHR30308">
    <property type="entry name" value="TMRNA-BINDING COMPONENT OF TRANS-TRANSLATION TAGGING COMPLEX"/>
    <property type="match status" value="1"/>
</dbReference>
<dbReference type="Pfam" id="PF01668">
    <property type="entry name" value="SmpB"/>
    <property type="match status" value="1"/>
</dbReference>
<dbReference type="SUPFAM" id="SSF74982">
    <property type="entry name" value="Small protein B (SmpB)"/>
    <property type="match status" value="1"/>
</dbReference>
<dbReference type="PROSITE" id="PS01317">
    <property type="entry name" value="SSRP"/>
    <property type="match status" value="1"/>
</dbReference>
<feature type="chain" id="PRO_0000331101" description="SsrA-binding protein">
    <location>
        <begin position="1"/>
        <end position="166"/>
    </location>
</feature>
<feature type="region of interest" description="Disordered" evidence="2">
    <location>
        <begin position="146"/>
        <end position="166"/>
    </location>
</feature>
<comment type="function">
    <text evidence="1">Required for rescue of stalled ribosomes mediated by trans-translation. Binds to transfer-messenger RNA (tmRNA), required for stable association of tmRNA with ribosomes. tmRNA and SmpB together mimic tRNA shape, replacing the anticodon stem-loop with SmpB. tmRNA is encoded by the ssrA gene; the 2 termini fold to resemble tRNA(Ala) and it encodes a 'tag peptide', a short internal open reading frame. During trans-translation Ala-aminoacylated tmRNA acts like a tRNA, entering the A-site of stalled ribosomes, displacing the stalled mRNA. The ribosome then switches to translate the ORF on the tmRNA; the nascent peptide is terminated with the 'tag peptide' encoded by the tmRNA and targeted for degradation. The ribosome is freed to recommence translation, which seems to be the essential function of trans-translation.</text>
</comment>
<comment type="subcellular location">
    <subcellularLocation>
        <location evidence="1">Cytoplasm</location>
    </subcellularLocation>
    <text evidence="1">The tmRNA-SmpB complex associates with stalled 70S ribosomes.</text>
</comment>
<comment type="similarity">
    <text evidence="1">Belongs to the SmpB family.</text>
</comment>
<organism>
    <name type="scientific">Synechococcus sp. (strain CC9605)</name>
    <dbReference type="NCBI Taxonomy" id="110662"/>
    <lineage>
        <taxon>Bacteria</taxon>
        <taxon>Bacillati</taxon>
        <taxon>Cyanobacteriota</taxon>
        <taxon>Cyanophyceae</taxon>
        <taxon>Synechococcales</taxon>
        <taxon>Synechococcaceae</taxon>
        <taxon>Synechococcus</taxon>
    </lineage>
</organism>
<keyword id="KW-0963">Cytoplasm</keyword>
<keyword id="KW-0694">RNA-binding</keyword>
<gene>
    <name evidence="1" type="primary">smpB</name>
    <name type="ordered locus">Syncc9605_0117</name>
</gene>
<proteinExistence type="inferred from homology"/>
<name>SSRP_SYNSC</name>
<protein>
    <recommendedName>
        <fullName evidence="1">SsrA-binding protein</fullName>
    </recommendedName>
    <alternativeName>
        <fullName evidence="1">Small protein B</fullName>
    </alternativeName>
</protein>
<accession>Q3AND9</accession>
<sequence length="166" mass="18590">MAKGGAKKAAAAAARAAANRMLADNRQARHQYEILETLETGIELVGTEVKSIRNGKANLRDGFCLIRNGELQLHNVHISPHTHAGNYFNHDPLRTRKLLAHRREIDKFRGLVDQKGLTLIPLSLQLKGSWIKLTIGLGKGRKLHDKRAAEKEKQSKKDVKAAMERY</sequence>
<reference key="1">
    <citation type="submission" date="2005-07" db="EMBL/GenBank/DDBJ databases">
        <title>Complete sequence of Synechococcus sp. CC9605.</title>
        <authorList>
            <consortium name="US DOE Joint Genome Institute"/>
            <person name="Copeland A."/>
            <person name="Lucas S."/>
            <person name="Lapidus A."/>
            <person name="Barry K."/>
            <person name="Detter J.C."/>
            <person name="Glavina T."/>
            <person name="Hammon N."/>
            <person name="Israni S."/>
            <person name="Pitluck S."/>
            <person name="Schmutz J."/>
            <person name="Martinez M."/>
            <person name="Larimer F."/>
            <person name="Land M."/>
            <person name="Kyrpides N."/>
            <person name="Ivanova N."/>
            <person name="Richardson P."/>
        </authorList>
    </citation>
    <scope>NUCLEOTIDE SEQUENCE [LARGE SCALE GENOMIC DNA]</scope>
    <source>
        <strain>CC9605</strain>
    </source>
</reference>